<comment type="function">
    <text evidence="1">Part of the tripartite efflux system MacAB-TolC. MacB is a non-canonical ABC transporter that contains transmembrane domains (TMD), which form a pore in the inner membrane, and an ATP-binding domain (NBD), which is responsible for energy generation. Confers resistance against macrolides.</text>
</comment>
<comment type="subunit">
    <text evidence="1">Homodimer. Part of the tripartite efflux system MacAB-TolC, which is composed of an inner membrane transporter, MacB, a periplasmic membrane fusion protein, MacA, and an outer membrane component, TolC. The complex forms a large protein conduit and can translocate molecules across both the inner and outer membranes. Interacts with MacA.</text>
</comment>
<comment type="subcellular location">
    <subcellularLocation>
        <location evidence="1">Cell inner membrane</location>
        <topology evidence="1">Multi-pass membrane protein</topology>
    </subcellularLocation>
</comment>
<comment type="similarity">
    <text evidence="1">Belongs to the ABC transporter superfamily. Macrolide exporter (TC 3.A.1.122) family.</text>
</comment>
<gene>
    <name evidence="1" type="primary">macB</name>
    <name type="ordered locus">MS1129</name>
</gene>
<feature type="chain" id="PRO_0000269946" description="Macrolide export ATP-binding/permease protein MacB">
    <location>
        <begin position="1"/>
        <end position="643"/>
    </location>
</feature>
<feature type="transmembrane region" description="Helical" evidence="1">
    <location>
        <begin position="269"/>
        <end position="289"/>
    </location>
</feature>
<feature type="transmembrane region" description="Helical" evidence="1">
    <location>
        <begin position="523"/>
        <end position="543"/>
    </location>
</feature>
<feature type="transmembrane region" description="Helical" evidence="1">
    <location>
        <begin position="572"/>
        <end position="592"/>
    </location>
</feature>
<feature type="transmembrane region" description="Helical" evidence="1">
    <location>
        <begin position="603"/>
        <end position="623"/>
    </location>
</feature>
<feature type="domain" description="ABC transporter" evidence="1">
    <location>
        <begin position="4"/>
        <end position="242"/>
    </location>
</feature>
<feature type="binding site" evidence="1">
    <location>
        <begin position="40"/>
        <end position="47"/>
    </location>
    <ligand>
        <name>ATP</name>
        <dbReference type="ChEBI" id="CHEBI:30616"/>
    </ligand>
</feature>
<evidence type="ECO:0000255" key="1">
    <source>
        <dbReference type="HAMAP-Rule" id="MF_01720"/>
    </source>
</evidence>
<proteinExistence type="inferred from homology"/>
<name>MACB_MANSM</name>
<keyword id="KW-0046">Antibiotic resistance</keyword>
<keyword id="KW-0067">ATP-binding</keyword>
<keyword id="KW-0997">Cell inner membrane</keyword>
<keyword id="KW-1003">Cell membrane</keyword>
<keyword id="KW-0472">Membrane</keyword>
<keyword id="KW-0547">Nucleotide-binding</keyword>
<keyword id="KW-1278">Translocase</keyword>
<keyword id="KW-0812">Transmembrane</keyword>
<keyword id="KW-1133">Transmembrane helix</keyword>
<keyword id="KW-0813">Transport</keyword>
<protein>
    <recommendedName>
        <fullName evidence="1">Macrolide export ATP-binding/permease protein MacB</fullName>
        <ecNumber evidence="1">7.6.2.-</ecNumber>
    </recommendedName>
</protein>
<sequence length="643" mass="69529">MNIIEIKELNRYFGEGENTVHVLKNISVNIEKGDFVAIIGQSGSGKSTLMNIIGCLDTATSGSYKIDGKETNELTSDQLSDLRSQKFGFIFQRYNLLSALTAAENVALPAIYAGKSQSERLARAEELLKKLGLDGKEKNKPSELSGGQQQRVSIARALMNGGEIILADEPTGALDSHSGENVLEILRQLHSEGHTIIMVTHDKNIAASANRIIEIKDGEIIDDTQKHPVQNTVNNQSKAKSRFGFSKDQLMEAFQMSVSAIIAHKMRSLLTMLGIIIGITSVVSVVALGNGSQQKILSNISGLGTNTMTIFNGTGFGDRRAEQMQNLTVNDANALAKQSYVQNVTPNSSSSGLLIYGNQSFTSTNLKGIGEQYFDVEGMTLKQGRSITAQEVRDNAQVALLDESSKKSIFPNDNPIDKIVMFAKRPFRIIGVVADRQMGAASSSLNIYAPYTTVMNKVTGGTKIDSITVKIADNVNTAVAEKSLTEYLTVRHGKKDFFIMNSDTIKQTIESTTGTMKLLISSIAFISLIVGGIGVMNIMLVSVTERTKEIGVRMAIGARKSNILQQFLIEAILICMIGGISGIMLSLIIGGIFNVFMTDFTMVFSTFSIVAAVLCSTLIGVIFGYMPAKNAAQLDPITALARE</sequence>
<dbReference type="EC" id="7.6.2.-" evidence="1"/>
<dbReference type="EMBL" id="AE016827">
    <property type="protein sequence ID" value="AAU37736.1"/>
    <property type="molecule type" value="Genomic_DNA"/>
</dbReference>
<dbReference type="RefSeq" id="WP_011200304.1">
    <property type="nucleotide sequence ID" value="NC_006300.1"/>
</dbReference>
<dbReference type="SMR" id="Q65TH4"/>
<dbReference type="STRING" id="221988.MS1129"/>
<dbReference type="KEGG" id="msu:MS1129"/>
<dbReference type="eggNOG" id="COG0577">
    <property type="taxonomic scope" value="Bacteria"/>
</dbReference>
<dbReference type="eggNOG" id="COG1136">
    <property type="taxonomic scope" value="Bacteria"/>
</dbReference>
<dbReference type="HOGENOM" id="CLU_000604_78_2_6"/>
<dbReference type="OrthoDB" id="9770036at2"/>
<dbReference type="Proteomes" id="UP000000607">
    <property type="component" value="Chromosome"/>
</dbReference>
<dbReference type="GO" id="GO:0005886">
    <property type="term" value="C:plasma membrane"/>
    <property type="evidence" value="ECO:0007669"/>
    <property type="project" value="UniProtKB-SubCell"/>
</dbReference>
<dbReference type="GO" id="GO:0005524">
    <property type="term" value="F:ATP binding"/>
    <property type="evidence" value="ECO:0007669"/>
    <property type="project" value="UniProtKB-KW"/>
</dbReference>
<dbReference type="GO" id="GO:0016887">
    <property type="term" value="F:ATP hydrolysis activity"/>
    <property type="evidence" value="ECO:0007669"/>
    <property type="project" value="InterPro"/>
</dbReference>
<dbReference type="GO" id="GO:0022857">
    <property type="term" value="F:transmembrane transporter activity"/>
    <property type="evidence" value="ECO:0007669"/>
    <property type="project" value="TreeGrafter"/>
</dbReference>
<dbReference type="GO" id="GO:0046677">
    <property type="term" value="P:response to antibiotic"/>
    <property type="evidence" value="ECO:0007669"/>
    <property type="project" value="UniProtKB-KW"/>
</dbReference>
<dbReference type="CDD" id="cd03255">
    <property type="entry name" value="ABC_MJ0796_LolCDE_FtsE"/>
    <property type="match status" value="1"/>
</dbReference>
<dbReference type="FunFam" id="3.40.50.300:FF:000032">
    <property type="entry name" value="Export ABC transporter ATP-binding protein"/>
    <property type="match status" value="1"/>
</dbReference>
<dbReference type="Gene3D" id="3.40.50.300">
    <property type="entry name" value="P-loop containing nucleotide triphosphate hydrolases"/>
    <property type="match status" value="1"/>
</dbReference>
<dbReference type="InterPro" id="IPR003593">
    <property type="entry name" value="AAA+_ATPase"/>
</dbReference>
<dbReference type="InterPro" id="IPR003838">
    <property type="entry name" value="ABC3_permease_C"/>
</dbReference>
<dbReference type="InterPro" id="IPR003439">
    <property type="entry name" value="ABC_transporter-like_ATP-bd"/>
</dbReference>
<dbReference type="InterPro" id="IPR017871">
    <property type="entry name" value="ABC_transporter-like_CS"/>
</dbReference>
<dbReference type="InterPro" id="IPR017911">
    <property type="entry name" value="MacB-like_ATP-bd"/>
</dbReference>
<dbReference type="InterPro" id="IPR025857">
    <property type="entry name" value="MacB_PCD"/>
</dbReference>
<dbReference type="InterPro" id="IPR050250">
    <property type="entry name" value="Macrolide_Exporter_MacB"/>
</dbReference>
<dbReference type="InterPro" id="IPR027417">
    <property type="entry name" value="P-loop_NTPase"/>
</dbReference>
<dbReference type="PANTHER" id="PTHR30572:SF14">
    <property type="entry name" value="MACROLIDE EXPORT ATP-BINDING_PERMEASE PROTEIN MACB"/>
    <property type="match status" value="1"/>
</dbReference>
<dbReference type="PANTHER" id="PTHR30572">
    <property type="entry name" value="MEMBRANE COMPONENT OF TRANSPORTER-RELATED"/>
    <property type="match status" value="1"/>
</dbReference>
<dbReference type="Pfam" id="PF00005">
    <property type="entry name" value="ABC_tran"/>
    <property type="match status" value="1"/>
</dbReference>
<dbReference type="Pfam" id="PF02687">
    <property type="entry name" value="FtsX"/>
    <property type="match status" value="1"/>
</dbReference>
<dbReference type="Pfam" id="PF12704">
    <property type="entry name" value="MacB_PCD"/>
    <property type="match status" value="1"/>
</dbReference>
<dbReference type="SMART" id="SM00382">
    <property type="entry name" value="AAA"/>
    <property type="match status" value="1"/>
</dbReference>
<dbReference type="SUPFAM" id="SSF52540">
    <property type="entry name" value="P-loop containing nucleoside triphosphate hydrolases"/>
    <property type="match status" value="1"/>
</dbReference>
<dbReference type="PROSITE" id="PS00211">
    <property type="entry name" value="ABC_TRANSPORTER_1"/>
    <property type="match status" value="1"/>
</dbReference>
<dbReference type="PROSITE" id="PS50893">
    <property type="entry name" value="ABC_TRANSPORTER_2"/>
    <property type="match status" value="1"/>
</dbReference>
<dbReference type="PROSITE" id="PS51267">
    <property type="entry name" value="MACB"/>
    <property type="match status" value="1"/>
</dbReference>
<accession>Q65TH4</accession>
<reference key="1">
    <citation type="journal article" date="2004" name="Nat. Biotechnol.">
        <title>The genome sequence of the capnophilic rumen bacterium Mannheimia succiniciproducens.</title>
        <authorList>
            <person name="Hong S.H."/>
            <person name="Kim J.S."/>
            <person name="Lee S.Y."/>
            <person name="In Y.H."/>
            <person name="Choi S.S."/>
            <person name="Rih J.-K."/>
            <person name="Kim C.H."/>
            <person name="Jeong H."/>
            <person name="Hur C.G."/>
            <person name="Kim J.J."/>
        </authorList>
    </citation>
    <scope>NUCLEOTIDE SEQUENCE [LARGE SCALE GENOMIC DNA]</scope>
    <source>
        <strain>KCTC 0769BP / MBEL55E</strain>
    </source>
</reference>
<organism>
    <name type="scientific">Mannheimia succiniciproducens (strain KCTC 0769BP / MBEL55E)</name>
    <dbReference type="NCBI Taxonomy" id="221988"/>
    <lineage>
        <taxon>Bacteria</taxon>
        <taxon>Pseudomonadati</taxon>
        <taxon>Pseudomonadota</taxon>
        <taxon>Gammaproteobacteria</taxon>
        <taxon>Pasteurellales</taxon>
        <taxon>Pasteurellaceae</taxon>
        <taxon>Basfia</taxon>
    </lineage>
</organism>